<organism>
    <name type="scientific">Mycobacterium ulcerans (strain Agy99)</name>
    <dbReference type="NCBI Taxonomy" id="362242"/>
    <lineage>
        <taxon>Bacteria</taxon>
        <taxon>Bacillati</taxon>
        <taxon>Actinomycetota</taxon>
        <taxon>Actinomycetes</taxon>
        <taxon>Mycobacteriales</taxon>
        <taxon>Mycobacteriaceae</taxon>
        <taxon>Mycobacterium</taxon>
        <taxon>Mycobacterium ulcerans group</taxon>
    </lineage>
</organism>
<gene>
    <name evidence="1" type="primary">rimM</name>
    <name type="ordered locus">MUL_2049</name>
</gene>
<protein>
    <recommendedName>
        <fullName evidence="1">Ribosome maturation factor RimM</fullName>
    </recommendedName>
</protein>
<keyword id="KW-0143">Chaperone</keyword>
<keyword id="KW-0963">Cytoplasm</keyword>
<keyword id="KW-0690">Ribosome biogenesis</keyword>
<keyword id="KW-0698">rRNA processing</keyword>
<reference key="1">
    <citation type="journal article" date="2007" name="Genome Res.">
        <title>Reductive evolution and niche adaptation inferred from the genome of Mycobacterium ulcerans, the causative agent of Buruli ulcer.</title>
        <authorList>
            <person name="Stinear T.P."/>
            <person name="Seemann T."/>
            <person name="Pidot S."/>
            <person name="Frigui W."/>
            <person name="Reysset G."/>
            <person name="Garnier T."/>
            <person name="Meurice G."/>
            <person name="Simon D."/>
            <person name="Bouchier C."/>
            <person name="Ma L."/>
            <person name="Tichit M."/>
            <person name="Porter J.L."/>
            <person name="Ryan J."/>
            <person name="Johnson P.D.R."/>
            <person name="Davies J.K."/>
            <person name="Jenkin G.A."/>
            <person name="Small P.L.C."/>
            <person name="Jones L.M."/>
            <person name="Tekaia F."/>
            <person name="Laval F."/>
            <person name="Daffe M."/>
            <person name="Parkhill J."/>
            <person name="Cole S.T."/>
        </authorList>
    </citation>
    <scope>NUCLEOTIDE SEQUENCE [LARGE SCALE GENOMIC DNA]</scope>
    <source>
        <strain>Agy99</strain>
    </source>
</reference>
<name>RIMM_MYCUA</name>
<sequence length="174" mass="18620">MELVIGRVVKAHGITGEVVVEIRTDEPDRRFTPGASLRAKRSRDGGTGRNYVIEGVREHGARLLVRLAGVNDRDTADGLRGSLFVIDSADLPPIEEPDTYYDHQLEGLRVRTTAGQDVGVVAEVLHTGAGELLAVKCDSGEVLVPFVGAIVTSVSLDDRILEIDPPDGLLDLGS</sequence>
<dbReference type="EMBL" id="CP000325">
    <property type="protein sequence ID" value="ABL04484.1"/>
    <property type="molecule type" value="Genomic_DNA"/>
</dbReference>
<dbReference type="RefSeq" id="WP_011740101.1">
    <property type="nucleotide sequence ID" value="NC_008611.1"/>
</dbReference>
<dbReference type="SMR" id="A0PQ65"/>
<dbReference type="GeneID" id="93436375"/>
<dbReference type="KEGG" id="mul:MUL_2049"/>
<dbReference type="eggNOG" id="COG0806">
    <property type="taxonomic scope" value="Bacteria"/>
</dbReference>
<dbReference type="HOGENOM" id="CLU_077636_0_0_11"/>
<dbReference type="Proteomes" id="UP000000765">
    <property type="component" value="Chromosome"/>
</dbReference>
<dbReference type="GO" id="GO:0005737">
    <property type="term" value="C:cytoplasm"/>
    <property type="evidence" value="ECO:0007669"/>
    <property type="project" value="UniProtKB-SubCell"/>
</dbReference>
<dbReference type="GO" id="GO:0005840">
    <property type="term" value="C:ribosome"/>
    <property type="evidence" value="ECO:0007669"/>
    <property type="project" value="InterPro"/>
</dbReference>
<dbReference type="GO" id="GO:0043022">
    <property type="term" value="F:ribosome binding"/>
    <property type="evidence" value="ECO:0007669"/>
    <property type="project" value="InterPro"/>
</dbReference>
<dbReference type="GO" id="GO:0042274">
    <property type="term" value="P:ribosomal small subunit biogenesis"/>
    <property type="evidence" value="ECO:0007669"/>
    <property type="project" value="UniProtKB-UniRule"/>
</dbReference>
<dbReference type="GO" id="GO:0006364">
    <property type="term" value="P:rRNA processing"/>
    <property type="evidence" value="ECO:0007669"/>
    <property type="project" value="UniProtKB-UniRule"/>
</dbReference>
<dbReference type="Gene3D" id="2.30.30.240">
    <property type="entry name" value="PRC-barrel domain"/>
    <property type="match status" value="1"/>
</dbReference>
<dbReference type="Gene3D" id="2.40.30.60">
    <property type="entry name" value="RimM"/>
    <property type="match status" value="1"/>
</dbReference>
<dbReference type="HAMAP" id="MF_00014">
    <property type="entry name" value="Ribosome_mat_RimM"/>
    <property type="match status" value="1"/>
</dbReference>
<dbReference type="InterPro" id="IPR011033">
    <property type="entry name" value="PRC_barrel-like_sf"/>
</dbReference>
<dbReference type="InterPro" id="IPR056792">
    <property type="entry name" value="PRC_RimM"/>
</dbReference>
<dbReference type="InterPro" id="IPR011961">
    <property type="entry name" value="RimM"/>
</dbReference>
<dbReference type="InterPro" id="IPR002676">
    <property type="entry name" value="RimM_N"/>
</dbReference>
<dbReference type="InterPro" id="IPR036976">
    <property type="entry name" value="RimM_N_sf"/>
</dbReference>
<dbReference type="InterPro" id="IPR009000">
    <property type="entry name" value="Transl_B-barrel_sf"/>
</dbReference>
<dbReference type="NCBIfam" id="TIGR02273">
    <property type="entry name" value="16S_RimM"/>
    <property type="match status" value="1"/>
</dbReference>
<dbReference type="PANTHER" id="PTHR33692">
    <property type="entry name" value="RIBOSOME MATURATION FACTOR RIMM"/>
    <property type="match status" value="1"/>
</dbReference>
<dbReference type="PANTHER" id="PTHR33692:SF1">
    <property type="entry name" value="RIBOSOME MATURATION FACTOR RIMM"/>
    <property type="match status" value="1"/>
</dbReference>
<dbReference type="Pfam" id="PF24986">
    <property type="entry name" value="PRC_RimM"/>
    <property type="match status" value="1"/>
</dbReference>
<dbReference type="Pfam" id="PF01782">
    <property type="entry name" value="RimM"/>
    <property type="match status" value="1"/>
</dbReference>
<dbReference type="SUPFAM" id="SSF50346">
    <property type="entry name" value="PRC-barrel domain"/>
    <property type="match status" value="1"/>
</dbReference>
<dbReference type="SUPFAM" id="SSF50447">
    <property type="entry name" value="Translation proteins"/>
    <property type="match status" value="1"/>
</dbReference>
<comment type="function">
    <text evidence="1">An accessory protein needed during the final step in the assembly of 30S ribosomal subunit, possibly for assembly of the head region. Essential for efficient processing of 16S rRNA. May be needed both before and after RbfA during the maturation of 16S rRNA. It has affinity for free ribosomal 30S subunits but not for 70S ribosomes.</text>
</comment>
<comment type="subunit">
    <text evidence="1">Binds ribosomal protein uS19.</text>
</comment>
<comment type="subcellular location">
    <subcellularLocation>
        <location evidence="1">Cytoplasm</location>
    </subcellularLocation>
</comment>
<comment type="domain">
    <text evidence="1">The PRC barrel domain binds ribosomal protein uS19.</text>
</comment>
<comment type="similarity">
    <text evidence="1">Belongs to the RimM family.</text>
</comment>
<feature type="chain" id="PRO_1000001202" description="Ribosome maturation factor RimM">
    <location>
        <begin position="1"/>
        <end position="174"/>
    </location>
</feature>
<feature type="domain" description="PRC barrel" evidence="1">
    <location>
        <begin position="97"/>
        <end position="169"/>
    </location>
</feature>
<accession>A0PQ65</accession>
<evidence type="ECO:0000255" key="1">
    <source>
        <dbReference type="HAMAP-Rule" id="MF_00014"/>
    </source>
</evidence>
<proteinExistence type="inferred from homology"/>